<reference key="1">
    <citation type="journal article" date="1983" name="Gene">
        <title>The complete nucleotide sequence of the Neurospora crassa am (NADP-specific glutamate dehydrogenase) gene.</title>
        <authorList>
            <person name="Kinnaird J.H."/>
            <person name="Fincham J.R.S."/>
        </authorList>
    </citation>
    <scope>NUCLEOTIDE SEQUENCE [GENOMIC DNA]</scope>
</reference>
<reference key="2">
    <citation type="journal article" date="2003" name="Nucleic Acids Res.">
        <title>What's in the genome of a filamentous fungus? Analysis of the Neurospora genome sequence.</title>
        <authorList>
            <person name="Mannhaupt G."/>
            <person name="Montrone C."/>
            <person name="Haase D."/>
            <person name="Mewes H.-W."/>
            <person name="Aign V."/>
            <person name="Hoheisel J.D."/>
            <person name="Fartmann B."/>
            <person name="Nyakatura G."/>
            <person name="Kempken F."/>
            <person name="Maier J."/>
            <person name="Schulte U."/>
        </authorList>
    </citation>
    <scope>NUCLEOTIDE SEQUENCE [LARGE SCALE GENOMIC DNA]</scope>
    <source>
        <strain>ATCC 24698 / 74-OR23-1A / CBS 708.71 / DSM 1257 / FGSC 987</strain>
    </source>
</reference>
<reference key="3">
    <citation type="journal article" date="2003" name="Nature">
        <title>The genome sequence of the filamentous fungus Neurospora crassa.</title>
        <authorList>
            <person name="Galagan J.E."/>
            <person name="Calvo S.E."/>
            <person name="Borkovich K.A."/>
            <person name="Selker E.U."/>
            <person name="Read N.D."/>
            <person name="Jaffe D.B."/>
            <person name="FitzHugh W."/>
            <person name="Ma L.-J."/>
            <person name="Smirnov S."/>
            <person name="Purcell S."/>
            <person name="Rehman B."/>
            <person name="Elkins T."/>
            <person name="Engels R."/>
            <person name="Wang S."/>
            <person name="Nielsen C.B."/>
            <person name="Butler J."/>
            <person name="Endrizzi M."/>
            <person name="Qui D."/>
            <person name="Ianakiev P."/>
            <person name="Bell-Pedersen D."/>
            <person name="Nelson M.A."/>
            <person name="Werner-Washburne M."/>
            <person name="Selitrennikoff C.P."/>
            <person name="Kinsey J.A."/>
            <person name="Braun E.L."/>
            <person name="Zelter A."/>
            <person name="Schulte U."/>
            <person name="Kothe G.O."/>
            <person name="Jedd G."/>
            <person name="Mewes H.-W."/>
            <person name="Staben C."/>
            <person name="Marcotte E."/>
            <person name="Greenberg D."/>
            <person name="Roy A."/>
            <person name="Foley K."/>
            <person name="Naylor J."/>
            <person name="Stange-Thomann N."/>
            <person name="Barrett R."/>
            <person name="Gnerre S."/>
            <person name="Kamal M."/>
            <person name="Kamvysselis M."/>
            <person name="Mauceli E.W."/>
            <person name="Bielke C."/>
            <person name="Rudd S."/>
            <person name="Frishman D."/>
            <person name="Krystofova S."/>
            <person name="Rasmussen C."/>
            <person name="Metzenberg R.L."/>
            <person name="Perkins D.D."/>
            <person name="Kroken S."/>
            <person name="Cogoni C."/>
            <person name="Macino G."/>
            <person name="Catcheside D.E.A."/>
            <person name="Li W."/>
            <person name="Pratt R.J."/>
            <person name="Osmani S.A."/>
            <person name="DeSouza C.P.C."/>
            <person name="Glass N.L."/>
            <person name="Orbach M.J."/>
            <person name="Berglund J.A."/>
            <person name="Voelker R."/>
            <person name="Yarden O."/>
            <person name="Plamann M."/>
            <person name="Seiler S."/>
            <person name="Dunlap J.C."/>
            <person name="Radford A."/>
            <person name="Aramayo R."/>
            <person name="Natvig D.O."/>
            <person name="Alex L.A."/>
            <person name="Mannhaupt G."/>
            <person name="Ebbole D.J."/>
            <person name="Freitag M."/>
            <person name="Paulsen I."/>
            <person name="Sachs M.S."/>
            <person name="Lander E.S."/>
            <person name="Nusbaum C."/>
            <person name="Birren B.W."/>
        </authorList>
    </citation>
    <scope>NUCLEOTIDE SEQUENCE [LARGE SCALE GENOMIC DNA]</scope>
    <source>
        <strain>ATCC 24698 / 74-OR23-1A / CBS 708.71 / DSM 1257 / FGSC 987</strain>
    </source>
</reference>
<reference key="4">
    <citation type="journal article" date="1975" name="Biochem. J.">
        <title>The amino acid sequence of Neurospora NADP-specific glutamate dehydrogenase. Peptic and chymotryptic peptides and the complete sequence.</title>
        <authorList>
            <person name="Holder A.A."/>
            <person name="Wootton J.C."/>
            <person name="Baron A.J."/>
            <person name="Chambers G.K."/>
            <person name="Fincham J.R.S."/>
        </authorList>
    </citation>
    <scope>PROTEIN SEQUENCE OF 2-454</scope>
    <scope>ACETYLATION AT SER-2</scope>
</reference>
<reference key="5">
    <citation type="journal article" date="1982" name="Gene">
        <title>Cloning of the am (glutamate dehydrogenase) gene of Neurospora crassa through the use of a synthetic DNA probe.</title>
        <authorList>
            <person name="Kinnaird J.H."/>
            <person name="Keighren M.A."/>
            <person name="Kinsey J.A."/>
            <person name="Eaton M."/>
            <person name="Fincham J.R.S."/>
        </authorList>
    </citation>
    <scope>NUCLEOTIDE SEQUENCE [GENOMIC DNA] OF 1-23</scope>
</reference>
<reference key="6">
    <citation type="journal article" date="1984" name="Gene">
        <title>An unstable mutant gene of the am locus of Neurospora results from a small duplication.</title>
        <authorList>
            <person name="Rambosek J.A."/>
            <person name="Kinsey J.A."/>
        </authorList>
    </citation>
    <scope>NUCLEOTIDE SEQUENCE [GENOMIC DNA] OF 1-25</scope>
</reference>
<sequence>MSNLPSEPEFEQAYKELAYTLENSSLFQKHPEYRTALTVASIPERVIQFRVVWEDDNGNVQVNRGYRVQFNSALGPYKGGLRLHPSVNLSILKFLGFEQIFKNALTGLSMGGGKGGADFDPKGKSDAEIRRFCCAFMAELHKHIGADTDVPAGDIGVGGREIGYMFGAYRKAANRFEGVLTGKGLSWGGSLIRPEATGYGLVYYVGHMLEYSGAGSYAGKRVALSGSGNVAQYAALKLIELGATVVSLSDSKGALVATGESGITVEDINAVMAIKEARQSLTSFQHAGHLKWIEGARPWLHVGKVDIALPCATQNEVSKEEAEGLLAAGCKFVAEGSNMGCTLEAIEVFENNRKEKKGEAVWYAPGKAANCGGVAVSGLEMAQNSQRLNWTQAEVDEKLKDIMKNAFFNGLNTAKTYVEAAEGELPSLVAGSNIAGFVKVAQAMHDQGDWWSKN</sequence>
<name>DHE4_NEUCR</name>
<accession>P00369</accession>
<accession>Q7RVE1</accession>
<feature type="initiator methionine" description="Removed" evidence="2">
    <location>
        <position position="1"/>
    </location>
</feature>
<feature type="chain" id="PRO_0000182790" description="NADP-specific glutamate dehydrogenase">
    <location>
        <begin position="2"/>
        <end position="454"/>
    </location>
</feature>
<feature type="active site" evidence="1">
    <location>
        <position position="114"/>
    </location>
</feature>
<feature type="modified residue" description="N-acetylserine" evidence="2">
    <location>
        <position position="2"/>
    </location>
</feature>
<feature type="sequence conflict" description="In Ref. 4; AA sequence." evidence="3" ref="4">
    <original>N</original>
    <variation>D</variation>
    <location>
        <position position="57"/>
    </location>
</feature>
<feature type="sequence conflict" description="In Ref. 4; AA sequence." evidence="3" ref="4">
    <original>QN</original>
    <variation>ED</variation>
    <location>
        <begin position="314"/>
        <end position="315"/>
    </location>
</feature>
<feature type="sequence conflict" description="In Ref. 4; AA sequence." evidence="3" ref="4">
    <location>
        <position position="451"/>
    </location>
</feature>
<proteinExistence type="evidence at protein level"/>
<dbReference type="EC" id="1.4.1.4"/>
<dbReference type="EMBL" id="K01409">
    <property type="protein sequence ID" value="AAA33558.1"/>
    <property type="molecule type" value="Genomic_DNA"/>
</dbReference>
<dbReference type="EMBL" id="AL670011">
    <property type="protein sequence ID" value="CAD21426.1"/>
    <property type="molecule type" value="Genomic_DNA"/>
</dbReference>
<dbReference type="EMBL" id="CM002240">
    <property type="protein sequence ID" value="EAA32325.1"/>
    <property type="molecule type" value="Genomic_DNA"/>
</dbReference>
<dbReference type="EMBL" id="K01653">
    <property type="protein sequence ID" value="AAA33557.1"/>
    <property type="molecule type" value="Genomic_DNA"/>
</dbReference>
<dbReference type="EMBL" id="K02468">
    <property type="protein sequence ID" value="AAA33559.1"/>
    <property type="molecule type" value="Genomic_DNA"/>
</dbReference>
<dbReference type="PIR" id="A91506">
    <property type="entry name" value="DENCEN"/>
</dbReference>
<dbReference type="RefSeq" id="XP_961561.1">
    <property type="nucleotide sequence ID" value="XM_956468.3"/>
</dbReference>
<dbReference type="SMR" id="P00369"/>
<dbReference type="FunCoup" id="P00369">
    <property type="interactions" value="734"/>
</dbReference>
<dbReference type="STRING" id="367110.P00369"/>
<dbReference type="iPTMnet" id="P00369"/>
<dbReference type="PaxDb" id="5141-EFNCRP00000004414"/>
<dbReference type="EnsemblFungi" id="EAA32325">
    <property type="protein sequence ID" value="EAA32325"/>
    <property type="gene ID" value="NCU01195"/>
</dbReference>
<dbReference type="GeneID" id="3877684"/>
<dbReference type="KEGG" id="ncr:NCU01195"/>
<dbReference type="VEuPathDB" id="FungiDB:NCU01195"/>
<dbReference type="HOGENOM" id="CLU_025763_2_0_1"/>
<dbReference type="InParanoid" id="P00369"/>
<dbReference type="OMA" id="MIMGWMM"/>
<dbReference type="OrthoDB" id="6718861at2759"/>
<dbReference type="BioCyc" id="MetaCyc:MONOMER-13461"/>
<dbReference type="Proteomes" id="UP000001805">
    <property type="component" value="Chromosome 2, Linkage Group V"/>
</dbReference>
<dbReference type="GO" id="GO:0005829">
    <property type="term" value="C:cytosol"/>
    <property type="evidence" value="ECO:0000318"/>
    <property type="project" value="GO_Central"/>
</dbReference>
<dbReference type="GO" id="GO:0004354">
    <property type="term" value="F:glutamate dehydrogenase (NADP+) activity"/>
    <property type="evidence" value="ECO:0000318"/>
    <property type="project" value="GO_Central"/>
</dbReference>
<dbReference type="GO" id="GO:0006537">
    <property type="term" value="P:glutamate biosynthetic process"/>
    <property type="evidence" value="ECO:0000318"/>
    <property type="project" value="GO_Central"/>
</dbReference>
<dbReference type="CDD" id="cd05313">
    <property type="entry name" value="NAD_bind_2_Glu_DH"/>
    <property type="match status" value="1"/>
</dbReference>
<dbReference type="FunFam" id="1.10.285.10:FF:000001">
    <property type="entry name" value="Glutamate dehydrogenase"/>
    <property type="match status" value="1"/>
</dbReference>
<dbReference type="FunFam" id="1.10.285.10:FF:000003">
    <property type="entry name" value="Glutamate dehydrogenase"/>
    <property type="match status" value="1"/>
</dbReference>
<dbReference type="FunFam" id="3.40.50.10860:FF:000002">
    <property type="entry name" value="Glutamate dehydrogenase"/>
    <property type="match status" value="1"/>
</dbReference>
<dbReference type="FunFam" id="3.40.50.720:FF:000030">
    <property type="entry name" value="Glutamate dehydrogenase"/>
    <property type="match status" value="1"/>
</dbReference>
<dbReference type="Gene3D" id="1.10.285.10">
    <property type="entry name" value="Glutamate Dehydrogenase, chain A, domain 3"/>
    <property type="match status" value="2"/>
</dbReference>
<dbReference type="Gene3D" id="3.40.50.10860">
    <property type="entry name" value="Leucine Dehydrogenase, chain A, domain 1"/>
    <property type="match status" value="1"/>
</dbReference>
<dbReference type="Gene3D" id="3.40.50.720">
    <property type="entry name" value="NAD(P)-binding Rossmann-like Domain"/>
    <property type="match status" value="1"/>
</dbReference>
<dbReference type="InterPro" id="IPR046346">
    <property type="entry name" value="Aminoacid_DH-like_N_sf"/>
</dbReference>
<dbReference type="InterPro" id="IPR006095">
    <property type="entry name" value="Glu/Leu/Phe/Val/Trp_DH"/>
</dbReference>
<dbReference type="InterPro" id="IPR006096">
    <property type="entry name" value="Glu/Leu/Phe/Val/Trp_DH_C"/>
</dbReference>
<dbReference type="InterPro" id="IPR006097">
    <property type="entry name" value="Glu/Leu/Phe/Val/Trp_DH_dimer"/>
</dbReference>
<dbReference type="InterPro" id="IPR033524">
    <property type="entry name" value="Glu/Leu/Phe/Val_DH_AS"/>
</dbReference>
<dbReference type="InterPro" id="IPR014362">
    <property type="entry name" value="Glu_DH"/>
</dbReference>
<dbReference type="InterPro" id="IPR050724">
    <property type="entry name" value="Glu_Leu_Phe_Val_DH"/>
</dbReference>
<dbReference type="InterPro" id="IPR036291">
    <property type="entry name" value="NAD(P)-bd_dom_sf"/>
</dbReference>
<dbReference type="InterPro" id="IPR033922">
    <property type="entry name" value="NAD_bind_Glu_DH"/>
</dbReference>
<dbReference type="NCBIfam" id="NF006929">
    <property type="entry name" value="PRK09414.1"/>
    <property type="match status" value="1"/>
</dbReference>
<dbReference type="PANTHER" id="PTHR43571">
    <property type="entry name" value="NADP-SPECIFIC GLUTAMATE DEHYDROGENASE 1-RELATED"/>
    <property type="match status" value="1"/>
</dbReference>
<dbReference type="PANTHER" id="PTHR43571:SF1">
    <property type="entry name" value="NADP-SPECIFIC GLUTAMATE DEHYDROGENASE 1-RELATED"/>
    <property type="match status" value="1"/>
</dbReference>
<dbReference type="Pfam" id="PF00208">
    <property type="entry name" value="ELFV_dehydrog"/>
    <property type="match status" value="1"/>
</dbReference>
<dbReference type="Pfam" id="PF02812">
    <property type="entry name" value="ELFV_dehydrog_N"/>
    <property type="match status" value="1"/>
</dbReference>
<dbReference type="PIRSF" id="PIRSF000185">
    <property type="entry name" value="Glu_DH"/>
    <property type="match status" value="1"/>
</dbReference>
<dbReference type="PRINTS" id="PR00082">
    <property type="entry name" value="GLFDHDRGNASE"/>
</dbReference>
<dbReference type="SMART" id="SM00839">
    <property type="entry name" value="ELFV_dehydrog"/>
    <property type="match status" value="1"/>
</dbReference>
<dbReference type="SUPFAM" id="SSF53223">
    <property type="entry name" value="Aminoacid dehydrogenase-like, N-terminal domain"/>
    <property type="match status" value="1"/>
</dbReference>
<dbReference type="SUPFAM" id="SSF51735">
    <property type="entry name" value="NAD(P)-binding Rossmann-fold domains"/>
    <property type="match status" value="1"/>
</dbReference>
<dbReference type="PROSITE" id="PS00074">
    <property type="entry name" value="GLFV_DEHYDROGENASE"/>
    <property type="match status" value="1"/>
</dbReference>
<keyword id="KW-0007">Acetylation</keyword>
<keyword id="KW-0903">Direct protein sequencing</keyword>
<keyword id="KW-0521">NADP</keyword>
<keyword id="KW-0560">Oxidoreductase</keyword>
<keyword id="KW-1185">Reference proteome</keyword>
<comment type="catalytic activity">
    <reaction>
        <text>L-glutamate + NADP(+) + H2O = 2-oxoglutarate + NH4(+) + NADPH + H(+)</text>
        <dbReference type="Rhea" id="RHEA:11612"/>
        <dbReference type="ChEBI" id="CHEBI:15377"/>
        <dbReference type="ChEBI" id="CHEBI:15378"/>
        <dbReference type="ChEBI" id="CHEBI:16810"/>
        <dbReference type="ChEBI" id="CHEBI:28938"/>
        <dbReference type="ChEBI" id="CHEBI:29985"/>
        <dbReference type="ChEBI" id="CHEBI:57783"/>
        <dbReference type="ChEBI" id="CHEBI:58349"/>
        <dbReference type="EC" id="1.4.1.4"/>
    </reaction>
</comment>
<comment type="subunit">
    <text>Homohexamer.</text>
</comment>
<comment type="similarity">
    <text evidence="3">Belongs to the Glu/Leu/Phe/Val dehydrogenases family.</text>
</comment>
<evidence type="ECO:0000255" key="1">
    <source>
        <dbReference type="PROSITE-ProRule" id="PRU10011"/>
    </source>
</evidence>
<evidence type="ECO:0000269" key="2">
    <source>
    </source>
</evidence>
<evidence type="ECO:0000305" key="3"/>
<protein>
    <recommendedName>
        <fullName>NADP-specific glutamate dehydrogenase</fullName>
        <shortName>NADP-GDH</shortName>
        <ecNumber>1.4.1.4</ecNumber>
    </recommendedName>
    <alternativeName>
        <fullName>NADP-dependent glutamate dehydrogenase</fullName>
    </alternativeName>
</protein>
<gene>
    <name type="primary">gdh</name>
    <name type="synonym">am</name>
    <name type="ORF">18F11.230</name>
    <name type="ORF">NCU01195</name>
</gene>
<organism>
    <name type="scientific">Neurospora crassa (strain ATCC 24698 / 74-OR23-1A / CBS 708.71 / DSM 1257 / FGSC 987)</name>
    <dbReference type="NCBI Taxonomy" id="367110"/>
    <lineage>
        <taxon>Eukaryota</taxon>
        <taxon>Fungi</taxon>
        <taxon>Dikarya</taxon>
        <taxon>Ascomycota</taxon>
        <taxon>Pezizomycotina</taxon>
        <taxon>Sordariomycetes</taxon>
        <taxon>Sordariomycetidae</taxon>
        <taxon>Sordariales</taxon>
        <taxon>Sordariaceae</taxon>
        <taxon>Neurospora</taxon>
    </lineage>
</organism>